<feature type="chain" id="PRO_1000050534" description="Ketol-acid reductoisomerase (NADP(+))">
    <location>
        <begin position="1"/>
        <end position="330"/>
    </location>
</feature>
<feature type="domain" description="KARI N-terminal Rossmann" evidence="2">
    <location>
        <begin position="1"/>
        <end position="181"/>
    </location>
</feature>
<feature type="domain" description="KARI C-terminal knotted" evidence="3">
    <location>
        <begin position="182"/>
        <end position="327"/>
    </location>
</feature>
<feature type="active site" evidence="1">
    <location>
        <position position="107"/>
    </location>
</feature>
<feature type="binding site" evidence="1">
    <location>
        <begin position="24"/>
        <end position="27"/>
    </location>
    <ligand>
        <name>NADP(+)</name>
        <dbReference type="ChEBI" id="CHEBI:58349"/>
    </ligand>
</feature>
<feature type="binding site" evidence="1">
    <location>
        <position position="47"/>
    </location>
    <ligand>
        <name>NADP(+)</name>
        <dbReference type="ChEBI" id="CHEBI:58349"/>
    </ligand>
</feature>
<feature type="binding site" evidence="1">
    <location>
        <position position="52"/>
    </location>
    <ligand>
        <name>NADP(+)</name>
        <dbReference type="ChEBI" id="CHEBI:58349"/>
    </ligand>
</feature>
<feature type="binding site" evidence="1">
    <location>
        <begin position="82"/>
        <end position="85"/>
    </location>
    <ligand>
        <name>NADP(+)</name>
        <dbReference type="ChEBI" id="CHEBI:58349"/>
    </ligand>
</feature>
<feature type="binding site" evidence="1">
    <location>
        <position position="133"/>
    </location>
    <ligand>
        <name>NADP(+)</name>
        <dbReference type="ChEBI" id="CHEBI:58349"/>
    </ligand>
</feature>
<feature type="binding site" evidence="1">
    <location>
        <position position="190"/>
    </location>
    <ligand>
        <name>Mg(2+)</name>
        <dbReference type="ChEBI" id="CHEBI:18420"/>
        <label>1</label>
    </ligand>
</feature>
<feature type="binding site" evidence="1">
    <location>
        <position position="190"/>
    </location>
    <ligand>
        <name>Mg(2+)</name>
        <dbReference type="ChEBI" id="CHEBI:18420"/>
        <label>2</label>
    </ligand>
</feature>
<feature type="binding site" evidence="1">
    <location>
        <position position="194"/>
    </location>
    <ligand>
        <name>Mg(2+)</name>
        <dbReference type="ChEBI" id="CHEBI:18420"/>
        <label>1</label>
    </ligand>
</feature>
<feature type="binding site" evidence="1">
    <location>
        <position position="226"/>
    </location>
    <ligand>
        <name>Mg(2+)</name>
        <dbReference type="ChEBI" id="CHEBI:18420"/>
        <label>2</label>
    </ligand>
</feature>
<feature type="binding site" evidence="1">
    <location>
        <position position="230"/>
    </location>
    <ligand>
        <name>Mg(2+)</name>
        <dbReference type="ChEBI" id="CHEBI:18420"/>
        <label>2</label>
    </ligand>
</feature>
<feature type="binding site" evidence="1">
    <location>
        <position position="251"/>
    </location>
    <ligand>
        <name>substrate</name>
    </ligand>
</feature>
<accession>A5UMJ9</accession>
<sequence length="330" mass="36106">MKMYYESDVNTDALEGKTVAVMGYGSQGRAQSRNMADSGVNVIVGLRENGNSWNLAKEDGMTVKTFSDAAKEADIIHILLPDEIQEKVYNEQIAPYVEAGNTISFSHGYNIHFGLIKPDEDVNIVMFAPKGPGSRVRTTYLDGFGIPGLVAIEQDATGDALQLALGMAKACGFTKAGVIETTFKEETETDLFGEQAVLCGGLTALINAGFQTLVEAGYQPEIAYFETCHEVKLIVDDIYEHGFGGMWKDVSNTAEYGGLTRRDYVITEETKKGMKKVLSEIQDGTFKKQFADENATDAANLKEMRAAEDQETIEVVGERLRKACGLQKDD</sequence>
<organism>
    <name type="scientific">Methanobrevibacter smithii (strain ATCC 35061 / DSM 861 / OCM 144 / PS)</name>
    <dbReference type="NCBI Taxonomy" id="420247"/>
    <lineage>
        <taxon>Archaea</taxon>
        <taxon>Methanobacteriati</taxon>
        <taxon>Methanobacteriota</taxon>
        <taxon>Methanomada group</taxon>
        <taxon>Methanobacteria</taxon>
        <taxon>Methanobacteriales</taxon>
        <taxon>Methanobacteriaceae</taxon>
        <taxon>Methanobrevibacter</taxon>
    </lineage>
</organism>
<gene>
    <name evidence="1" type="primary">ilvC</name>
    <name type="ordered locus">Msm_1222</name>
</gene>
<keyword id="KW-0028">Amino-acid biosynthesis</keyword>
<keyword id="KW-0100">Branched-chain amino acid biosynthesis</keyword>
<keyword id="KW-0460">Magnesium</keyword>
<keyword id="KW-0479">Metal-binding</keyword>
<keyword id="KW-0521">NADP</keyword>
<keyword id="KW-0560">Oxidoreductase</keyword>
<protein>
    <recommendedName>
        <fullName evidence="1">Ketol-acid reductoisomerase (NADP(+))</fullName>
        <shortName evidence="1">KARI</shortName>
        <ecNumber evidence="1">1.1.1.86</ecNumber>
    </recommendedName>
    <alternativeName>
        <fullName evidence="1">Acetohydroxy-acid isomeroreductase</fullName>
        <shortName evidence="1">AHIR</shortName>
    </alternativeName>
    <alternativeName>
        <fullName evidence="1">Alpha-keto-beta-hydroxylacyl reductoisomerase</fullName>
    </alternativeName>
    <alternativeName>
        <fullName evidence="1">Ketol-acid reductoisomerase type 1</fullName>
    </alternativeName>
    <alternativeName>
        <fullName evidence="1">Ketol-acid reductoisomerase type I</fullName>
    </alternativeName>
</protein>
<reference key="1">
    <citation type="journal article" date="2007" name="Proc. Natl. Acad. Sci. U.S.A.">
        <title>Genomic and metabolic adaptations of Methanobrevibacter smithii to the human gut.</title>
        <authorList>
            <person name="Samuel B.S."/>
            <person name="Hansen E.E."/>
            <person name="Manchester J.K."/>
            <person name="Coutinho P.M."/>
            <person name="Henrissat B."/>
            <person name="Fulton R."/>
            <person name="Latreille P."/>
            <person name="Kim K."/>
            <person name="Wilson R.K."/>
            <person name="Gordon J.I."/>
        </authorList>
    </citation>
    <scope>NUCLEOTIDE SEQUENCE [LARGE SCALE GENOMIC DNA]</scope>
    <source>
        <strain>ATCC 35061 / DSM 861 / OCM 144 / PS</strain>
    </source>
</reference>
<evidence type="ECO:0000255" key="1">
    <source>
        <dbReference type="HAMAP-Rule" id="MF_00435"/>
    </source>
</evidence>
<evidence type="ECO:0000255" key="2">
    <source>
        <dbReference type="PROSITE-ProRule" id="PRU01197"/>
    </source>
</evidence>
<evidence type="ECO:0000255" key="3">
    <source>
        <dbReference type="PROSITE-ProRule" id="PRU01198"/>
    </source>
</evidence>
<proteinExistence type="inferred from homology"/>
<dbReference type="EC" id="1.1.1.86" evidence="1"/>
<dbReference type="EMBL" id="CP000678">
    <property type="protein sequence ID" value="ABQ87427.1"/>
    <property type="molecule type" value="Genomic_DNA"/>
</dbReference>
<dbReference type="RefSeq" id="WP_004032710.1">
    <property type="nucleotide sequence ID" value="NZ_CP117965.1"/>
</dbReference>
<dbReference type="SMR" id="A5UMJ9"/>
<dbReference type="STRING" id="420247.Msm_1222"/>
<dbReference type="EnsemblBacteria" id="ABQ87427">
    <property type="protein sequence ID" value="ABQ87427"/>
    <property type="gene ID" value="Msm_1222"/>
</dbReference>
<dbReference type="GeneID" id="78817875"/>
<dbReference type="KEGG" id="msi:Msm_1222"/>
<dbReference type="PATRIC" id="fig|420247.28.peg.1221"/>
<dbReference type="eggNOG" id="arCOG04465">
    <property type="taxonomic scope" value="Archaea"/>
</dbReference>
<dbReference type="HOGENOM" id="CLU_033821_0_1_2"/>
<dbReference type="UniPathway" id="UPA00047">
    <property type="reaction ID" value="UER00056"/>
</dbReference>
<dbReference type="UniPathway" id="UPA00049">
    <property type="reaction ID" value="UER00060"/>
</dbReference>
<dbReference type="Proteomes" id="UP000001992">
    <property type="component" value="Chromosome"/>
</dbReference>
<dbReference type="GO" id="GO:0004455">
    <property type="term" value="F:ketol-acid reductoisomerase activity"/>
    <property type="evidence" value="ECO:0007669"/>
    <property type="project" value="UniProtKB-UniRule"/>
</dbReference>
<dbReference type="GO" id="GO:0000287">
    <property type="term" value="F:magnesium ion binding"/>
    <property type="evidence" value="ECO:0007669"/>
    <property type="project" value="UniProtKB-UniRule"/>
</dbReference>
<dbReference type="GO" id="GO:0050661">
    <property type="term" value="F:NADP binding"/>
    <property type="evidence" value="ECO:0007669"/>
    <property type="project" value="InterPro"/>
</dbReference>
<dbReference type="GO" id="GO:0009097">
    <property type="term" value="P:isoleucine biosynthetic process"/>
    <property type="evidence" value="ECO:0007669"/>
    <property type="project" value="UniProtKB-UniRule"/>
</dbReference>
<dbReference type="GO" id="GO:0009099">
    <property type="term" value="P:L-valine biosynthetic process"/>
    <property type="evidence" value="ECO:0007669"/>
    <property type="project" value="UniProtKB-UniRule"/>
</dbReference>
<dbReference type="FunFam" id="3.40.50.720:FF:000023">
    <property type="entry name" value="Ketol-acid reductoisomerase (NADP(+))"/>
    <property type="match status" value="1"/>
</dbReference>
<dbReference type="Gene3D" id="6.10.240.10">
    <property type="match status" value="1"/>
</dbReference>
<dbReference type="Gene3D" id="3.40.50.720">
    <property type="entry name" value="NAD(P)-binding Rossmann-like Domain"/>
    <property type="match status" value="1"/>
</dbReference>
<dbReference type="HAMAP" id="MF_00435">
    <property type="entry name" value="IlvC"/>
    <property type="match status" value="1"/>
</dbReference>
<dbReference type="InterPro" id="IPR008927">
    <property type="entry name" value="6-PGluconate_DH-like_C_sf"/>
</dbReference>
<dbReference type="InterPro" id="IPR013023">
    <property type="entry name" value="KARI"/>
</dbReference>
<dbReference type="InterPro" id="IPR000506">
    <property type="entry name" value="KARI_C"/>
</dbReference>
<dbReference type="InterPro" id="IPR013116">
    <property type="entry name" value="KARI_N"/>
</dbReference>
<dbReference type="InterPro" id="IPR014359">
    <property type="entry name" value="KARI_prok"/>
</dbReference>
<dbReference type="InterPro" id="IPR036291">
    <property type="entry name" value="NAD(P)-bd_dom_sf"/>
</dbReference>
<dbReference type="NCBIfam" id="TIGR00465">
    <property type="entry name" value="ilvC"/>
    <property type="match status" value="1"/>
</dbReference>
<dbReference type="NCBIfam" id="NF004017">
    <property type="entry name" value="PRK05479.1"/>
    <property type="match status" value="1"/>
</dbReference>
<dbReference type="PANTHER" id="PTHR21371">
    <property type="entry name" value="KETOL-ACID REDUCTOISOMERASE, MITOCHONDRIAL"/>
    <property type="match status" value="1"/>
</dbReference>
<dbReference type="PANTHER" id="PTHR21371:SF1">
    <property type="entry name" value="KETOL-ACID REDUCTOISOMERASE, MITOCHONDRIAL"/>
    <property type="match status" value="1"/>
</dbReference>
<dbReference type="Pfam" id="PF01450">
    <property type="entry name" value="KARI_C"/>
    <property type="match status" value="1"/>
</dbReference>
<dbReference type="Pfam" id="PF07991">
    <property type="entry name" value="KARI_N"/>
    <property type="match status" value="1"/>
</dbReference>
<dbReference type="PIRSF" id="PIRSF000116">
    <property type="entry name" value="IlvC_gammaproteo"/>
    <property type="match status" value="1"/>
</dbReference>
<dbReference type="SUPFAM" id="SSF48179">
    <property type="entry name" value="6-phosphogluconate dehydrogenase C-terminal domain-like"/>
    <property type="match status" value="1"/>
</dbReference>
<dbReference type="SUPFAM" id="SSF51735">
    <property type="entry name" value="NAD(P)-binding Rossmann-fold domains"/>
    <property type="match status" value="1"/>
</dbReference>
<dbReference type="PROSITE" id="PS51851">
    <property type="entry name" value="KARI_C"/>
    <property type="match status" value="1"/>
</dbReference>
<dbReference type="PROSITE" id="PS51850">
    <property type="entry name" value="KARI_N"/>
    <property type="match status" value="1"/>
</dbReference>
<name>ILVC_METS3</name>
<comment type="function">
    <text evidence="1">Involved in the biosynthesis of branched-chain amino acids (BCAA). Catalyzes an alkyl-migration followed by a ketol-acid reduction of (S)-2-acetolactate (S2AL) to yield (R)-2,3-dihydroxy-isovalerate. In the isomerase reaction, S2AL is rearranged via a Mg-dependent methyl migration to produce 3-hydroxy-3-methyl-2-ketobutyrate (HMKB). In the reductase reaction, this 2-ketoacid undergoes a metal-dependent reduction by NADPH to yield (R)-2,3-dihydroxy-isovalerate.</text>
</comment>
<comment type="catalytic activity">
    <reaction evidence="1">
        <text>(2R)-2,3-dihydroxy-3-methylbutanoate + NADP(+) = (2S)-2-acetolactate + NADPH + H(+)</text>
        <dbReference type="Rhea" id="RHEA:22068"/>
        <dbReference type="ChEBI" id="CHEBI:15378"/>
        <dbReference type="ChEBI" id="CHEBI:49072"/>
        <dbReference type="ChEBI" id="CHEBI:57783"/>
        <dbReference type="ChEBI" id="CHEBI:58349"/>
        <dbReference type="ChEBI" id="CHEBI:58476"/>
        <dbReference type="EC" id="1.1.1.86"/>
    </reaction>
</comment>
<comment type="catalytic activity">
    <reaction evidence="1">
        <text>(2R,3R)-2,3-dihydroxy-3-methylpentanoate + NADP(+) = (S)-2-ethyl-2-hydroxy-3-oxobutanoate + NADPH + H(+)</text>
        <dbReference type="Rhea" id="RHEA:13493"/>
        <dbReference type="ChEBI" id="CHEBI:15378"/>
        <dbReference type="ChEBI" id="CHEBI:49256"/>
        <dbReference type="ChEBI" id="CHEBI:49258"/>
        <dbReference type="ChEBI" id="CHEBI:57783"/>
        <dbReference type="ChEBI" id="CHEBI:58349"/>
        <dbReference type="EC" id="1.1.1.86"/>
    </reaction>
</comment>
<comment type="cofactor">
    <cofactor evidence="1">
        <name>Mg(2+)</name>
        <dbReference type="ChEBI" id="CHEBI:18420"/>
    </cofactor>
    <text evidence="1">Binds 2 magnesium ions per subunit.</text>
</comment>
<comment type="pathway">
    <text evidence="1">Amino-acid biosynthesis; L-isoleucine biosynthesis; L-isoleucine from 2-oxobutanoate: step 2/4.</text>
</comment>
<comment type="pathway">
    <text evidence="1">Amino-acid biosynthesis; L-valine biosynthesis; L-valine from pyruvate: step 2/4.</text>
</comment>
<comment type="similarity">
    <text evidence="1">Belongs to the ketol-acid reductoisomerase family.</text>
</comment>